<accession>Q5HWE1</accession>
<feature type="chain" id="PRO_0000225712" description="Large ribosomal subunit protein bL32">
    <location>
        <begin position="1"/>
        <end position="48"/>
    </location>
</feature>
<feature type="region of interest" description="Disordered" evidence="2">
    <location>
        <begin position="1"/>
        <end position="48"/>
    </location>
</feature>
<feature type="compositionally biased region" description="Basic residues" evidence="2">
    <location>
        <begin position="1"/>
        <end position="20"/>
    </location>
</feature>
<comment type="similarity">
    <text evidence="1">Belongs to the bacterial ribosomal protein bL32 family.</text>
</comment>
<protein>
    <recommendedName>
        <fullName evidence="1">Large ribosomal subunit protein bL32</fullName>
    </recommendedName>
    <alternativeName>
        <fullName evidence="3">50S ribosomal protein L32</fullName>
    </alternativeName>
</protein>
<keyword id="KW-0687">Ribonucleoprotein</keyword>
<keyword id="KW-0689">Ribosomal protein</keyword>
<dbReference type="EMBL" id="CP000025">
    <property type="protein sequence ID" value="AAW34964.1"/>
    <property type="molecule type" value="Genomic_DNA"/>
</dbReference>
<dbReference type="RefSeq" id="WP_002858674.1">
    <property type="nucleotide sequence ID" value="NC_003912.7"/>
</dbReference>
<dbReference type="SMR" id="Q5HWE1"/>
<dbReference type="KEGG" id="cjr:CJE0375"/>
<dbReference type="HOGENOM" id="CLU_129084_1_2_7"/>
<dbReference type="GO" id="GO:0015934">
    <property type="term" value="C:large ribosomal subunit"/>
    <property type="evidence" value="ECO:0007669"/>
    <property type="project" value="InterPro"/>
</dbReference>
<dbReference type="GO" id="GO:0003735">
    <property type="term" value="F:structural constituent of ribosome"/>
    <property type="evidence" value="ECO:0007669"/>
    <property type="project" value="InterPro"/>
</dbReference>
<dbReference type="GO" id="GO:0006412">
    <property type="term" value="P:translation"/>
    <property type="evidence" value="ECO:0007669"/>
    <property type="project" value="UniProtKB-UniRule"/>
</dbReference>
<dbReference type="HAMAP" id="MF_00340">
    <property type="entry name" value="Ribosomal_bL32"/>
    <property type="match status" value="1"/>
</dbReference>
<dbReference type="InterPro" id="IPR002677">
    <property type="entry name" value="Ribosomal_bL32"/>
</dbReference>
<dbReference type="InterPro" id="IPR011332">
    <property type="entry name" value="Ribosomal_zn-bd"/>
</dbReference>
<dbReference type="NCBIfam" id="TIGR01031">
    <property type="entry name" value="rpmF_bact"/>
    <property type="match status" value="1"/>
</dbReference>
<dbReference type="Pfam" id="PF01783">
    <property type="entry name" value="Ribosomal_L32p"/>
    <property type="match status" value="1"/>
</dbReference>
<dbReference type="SUPFAM" id="SSF57829">
    <property type="entry name" value="Zn-binding ribosomal proteins"/>
    <property type="match status" value="1"/>
</dbReference>
<reference key="1">
    <citation type="journal article" date="2005" name="PLoS Biol.">
        <title>Major structural differences and novel potential virulence mechanisms from the genomes of multiple Campylobacter species.</title>
        <authorList>
            <person name="Fouts D.E."/>
            <person name="Mongodin E.F."/>
            <person name="Mandrell R.E."/>
            <person name="Miller W.G."/>
            <person name="Rasko D.A."/>
            <person name="Ravel J."/>
            <person name="Brinkac L.M."/>
            <person name="DeBoy R.T."/>
            <person name="Parker C.T."/>
            <person name="Daugherty S.C."/>
            <person name="Dodson R.J."/>
            <person name="Durkin A.S."/>
            <person name="Madupu R."/>
            <person name="Sullivan S.A."/>
            <person name="Shetty J.U."/>
            <person name="Ayodeji M.A."/>
            <person name="Shvartsbeyn A."/>
            <person name="Schatz M.C."/>
            <person name="Badger J.H."/>
            <person name="Fraser C.M."/>
            <person name="Nelson K.E."/>
        </authorList>
    </citation>
    <scope>NUCLEOTIDE SEQUENCE [LARGE SCALE GENOMIC DNA]</scope>
    <source>
        <strain>RM1221</strain>
    </source>
</reference>
<sequence length="48" mass="5628">MAVPKRRVSKTRAAKRRTHYKVSLPMPIKDKDGSYKMPHRANPTTKEY</sequence>
<name>RL32_CAMJR</name>
<proteinExistence type="inferred from homology"/>
<evidence type="ECO:0000255" key="1">
    <source>
        <dbReference type="HAMAP-Rule" id="MF_00340"/>
    </source>
</evidence>
<evidence type="ECO:0000256" key="2">
    <source>
        <dbReference type="SAM" id="MobiDB-lite"/>
    </source>
</evidence>
<evidence type="ECO:0000305" key="3"/>
<organism>
    <name type="scientific">Campylobacter jejuni (strain RM1221)</name>
    <dbReference type="NCBI Taxonomy" id="195099"/>
    <lineage>
        <taxon>Bacteria</taxon>
        <taxon>Pseudomonadati</taxon>
        <taxon>Campylobacterota</taxon>
        <taxon>Epsilonproteobacteria</taxon>
        <taxon>Campylobacterales</taxon>
        <taxon>Campylobacteraceae</taxon>
        <taxon>Campylobacter</taxon>
    </lineage>
</organism>
<gene>
    <name evidence="1" type="primary">rpmF</name>
    <name type="ordered locus">CJE0375</name>
</gene>